<keyword id="KW-0030">Aminoacyl-tRNA synthetase</keyword>
<keyword id="KW-0067">ATP-binding</keyword>
<keyword id="KW-0963">Cytoplasm</keyword>
<keyword id="KW-0436">Ligase</keyword>
<keyword id="KW-0547">Nucleotide-binding</keyword>
<keyword id="KW-0648">Protein biosynthesis</keyword>
<keyword id="KW-1185">Reference proteome</keyword>
<protein>
    <recommendedName>
        <fullName evidence="1">Arginine--tRNA ligase</fullName>
        <ecNumber evidence="1">6.1.1.19</ecNumber>
    </recommendedName>
    <alternativeName>
        <fullName evidence="1">Arginyl-tRNA synthetase</fullName>
        <shortName evidence="1">ArgRS</shortName>
    </alternativeName>
</protein>
<dbReference type="EC" id="6.1.1.19" evidence="1"/>
<dbReference type="EMBL" id="CP000010">
    <property type="protein sequence ID" value="AAU48639.1"/>
    <property type="molecule type" value="Genomic_DNA"/>
</dbReference>
<dbReference type="RefSeq" id="WP_004189649.1">
    <property type="nucleotide sequence ID" value="NC_006348.1"/>
</dbReference>
<dbReference type="RefSeq" id="YP_101930.1">
    <property type="nucleotide sequence ID" value="NC_006348.1"/>
</dbReference>
<dbReference type="SMR" id="Q62MY7"/>
<dbReference type="GeneID" id="92977866"/>
<dbReference type="KEGG" id="bma:BMA0084"/>
<dbReference type="PATRIC" id="fig|243160.12.peg.81"/>
<dbReference type="eggNOG" id="COG0018">
    <property type="taxonomic scope" value="Bacteria"/>
</dbReference>
<dbReference type="HOGENOM" id="CLU_006406_0_1_4"/>
<dbReference type="Proteomes" id="UP000006693">
    <property type="component" value="Chromosome 1"/>
</dbReference>
<dbReference type="GO" id="GO:0005737">
    <property type="term" value="C:cytoplasm"/>
    <property type="evidence" value="ECO:0007669"/>
    <property type="project" value="UniProtKB-SubCell"/>
</dbReference>
<dbReference type="GO" id="GO:0004814">
    <property type="term" value="F:arginine-tRNA ligase activity"/>
    <property type="evidence" value="ECO:0007669"/>
    <property type="project" value="UniProtKB-UniRule"/>
</dbReference>
<dbReference type="GO" id="GO:0005524">
    <property type="term" value="F:ATP binding"/>
    <property type="evidence" value="ECO:0007669"/>
    <property type="project" value="UniProtKB-UniRule"/>
</dbReference>
<dbReference type="GO" id="GO:0006420">
    <property type="term" value="P:arginyl-tRNA aminoacylation"/>
    <property type="evidence" value="ECO:0007669"/>
    <property type="project" value="UniProtKB-UniRule"/>
</dbReference>
<dbReference type="CDD" id="cd07956">
    <property type="entry name" value="Anticodon_Ia_Arg"/>
    <property type="match status" value="1"/>
</dbReference>
<dbReference type="CDD" id="cd00671">
    <property type="entry name" value="ArgRS_core"/>
    <property type="match status" value="1"/>
</dbReference>
<dbReference type="FunFam" id="1.10.730.10:FF:000008">
    <property type="entry name" value="Arginine--tRNA ligase"/>
    <property type="match status" value="1"/>
</dbReference>
<dbReference type="FunFam" id="3.40.50.620:FF:000062">
    <property type="entry name" value="Arginine--tRNA ligase"/>
    <property type="match status" value="1"/>
</dbReference>
<dbReference type="Gene3D" id="3.30.1360.70">
    <property type="entry name" value="Arginyl tRNA synthetase N-terminal domain"/>
    <property type="match status" value="1"/>
</dbReference>
<dbReference type="Gene3D" id="3.40.50.620">
    <property type="entry name" value="HUPs"/>
    <property type="match status" value="1"/>
</dbReference>
<dbReference type="Gene3D" id="1.10.730.10">
    <property type="entry name" value="Isoleucyl-tRNA Synthetase, Domain 1"/>
    <property type="match status" value="1"/>
</dbReference>
<dbReference type="HAMAP" id="MF_00123">
    <property type="entry name" value="Arg_tRNA_synth"/>
    <property type="match status" value="1"/>
</dbReference>
<dbReference type="InterPro" id="IPR001412">
    <property type="entry name" value="aa-tRNA-synth_I_CS"/>
</dbReference>
<dbReference type="InterPro" id="IPR001278">
    <property type="entry name" value="Arg-tRNA-ligase"/>
</dbReference>
<dbReference type="InterPro" id="IPR005148">
    <property type="entry name" value="Arg-tRNA-synth_N"/>
</dbReference>
<dbReference type="InterPro" id="IPR036695">
    <property type="entry name" value="Arg-tRNA-synth_N_sf"/>
</dbReference>
<dbReference type="InterPro" id="IPR035684">
    <property type="entry name" value="ArgRS_core"/>
</dbReference>
<dbReference type="InterPro" id="IPR008909">
    <property type="entry name" value="DALR_anticod-bd"/>
</dbReference>
<dbReference type="InterPro" id="IPR014729">
    <property type="entry name" value="Rossmann-like_a/b/a_fold"/>
</dbReference>
<dbReference type="InterPro" id="IPR009080">
    <property type="entry name" value="tRNAsynth_Ia_anticodon-bd"/>
</dbReference>
<dbReference type="NCBIfam" id="TIGR00456">
    <property type="entry name" value="argS"/>
    <property type="match status" value="1"/>
</dbReference>
<dbReference type="PANTHER" id="PTHR11956:SF5">
    <property type="entry name" value="ARGININE--TRNA LIGASE, CYTOPLASMIC"/>
    <property type="match status" value="1"/>
</dbReference>
<dbReference type="PANTHER" id="PTHR11956">
    <property type="entry name" value="ARGINYL-TRNA SYNTHETASE"/>
    <property type="match status" value="1"/>
</dbReference>
<dbReference type="Pfam" id="PF03485">
    <property type="entry name" value="Arg_tRNA_synt_N"/>
    <property type="match status" value="1"/>
</dbReference>
<dbReference type="Pfam" id="PF05746">
    <property type="entry name" value="DALR_1"/>
    <property type="match status" value="1"/>
</dbReference>
<dbReference type="Pfam" id="PF00750">
    <property type="entry name" value="tRNA-synt_1d"/>
    <property type="match status" value="1"/>
</dbReference>
<dbReference type="PRINTS" id="PR01038">
    <property type="entry name" value="TRNASYNTHARG"/>
</dbReference>
<dbReference type="SMART" id="SM01016">
    <property type="entry name" value="Arg_tRNA_synt_N"/>
    <property type="match status" value="1"/>
</dbReference>
<dbReference type="SMART" id="SM00836">
    <property type="entry name" value="DALR_1"/>
    <property type="match status" value="1"/>
</dbReference>
<dbReference type="SUPFAM" id="SSF47323">
    <property type="entry name" value="Anticodon-binding domain of a subclass of class I aminoacyl-tRNA synthetases"/>
    <property type="match status" value="1"/>
</dbReference>
<dbReference type="SUPFAM" id="SSF55190">
    <property type="entry name" value="Arginyl-tRNA synthetase (ArgRS), N-terminal 'additional' domain"/>
    <property type="match status" value="1"/>
</dbReference>
<dbReference type="SUPFAM" id="SSF52374">
    <property type="entry name" value="Nucleotidylyl transferase"/>
    <property type="match status" value="1"/>
</dbReference>
<dbReference type="PROSITE" id="PS00178">
    <property type="entry name" value="AA_TRNA_LIGASE_I"/>
    <property type="match status" value="1"/>
</dbReference>
<proteinExistence type="inferred from homology"/>
<sequence>MLPAQKHTLETLLENSVKQVVQASKGDADAAFVLPAIALERPKVAAHGDVACNVALQLAKPLGANPRQLAEQIVAALTAQPEAAGLVDAAEIAGPGFINLRLTPASKQAVIGAVLAQGRAFGASERDHDKRVLLEFVSANPTGPLHVGHGRQAALGDALANVLASQGYAVHREFYYNDAGVQIGNLAISTQARARGLKPGDAGWPEAAYNGEYIADIARDYLNGETVAASDGEPVTGKRDVEDLEAIRKFAVTYLRREQDMDLKAFGVKFDQYYLESSLYTEGRVEKTVDALIAAGMTYEQEGALWLRTTDEGDDKDRVMRKTDGTYTYFVPDVAYHVTKWERGFTKVINIQGSDHHGTIARVRAGLQGLHIGIPKGYPDYVLHKMVTVMRDGQEVKISKRAGSYVTVRDLIEWSGGATPGSEGSPELLDEATITRGRDAVRFFLISRKADTEFVFDIDLALKQNDENPVYYVQYAHARICSVINEWKSRYGATDALLPGADLSPLDSKQAMALMQKLAEYPDVLAHAAGELAPHAVAFYLRELASEFHSFYNAERVLVDEQAPRTARVALLAATRQVLENGLAMLGVSAPSKM</sequence>
<accession>Q62MY7</accession>
<reference key="1">
    <citation type="journal article" date="2004" name="Proc. Natl. Acad. Sci. U.S.A.">
        <title>Structural flexibility in the Burkholderia mallei genome.</title>
        <authorList>
            <person name="Nierman W.C."/>
            <person name="DeShazer D."/>
            <person name="Kim H.S."/>
            <person name="Tettelin H."/>
            <person name="Nelson K.E."/>
            <person name="Feldblyum T.V."/>
            <person name="Ulrich R.L."/>
            <person name="Ronning C.M."/>
            <person name="Brinkac L.M."/>
            <person name="Daugherty S.C."/>
            <person name="Davidsen T.D."/>
            <person name="DeBoy R.T."/>
            <person name="Dimitrov G."/>
            <person name="Dodson R.J."/>
            <person name="Durkin A.S."/>
            <person name="Gwinn M.L."/>
            <person name="Haft D.H."/>
            <person name="Khouri H.M."/>
            <person name="Kolonay J.F."/>
            <person name="Madupu R."/>
            <person name="Mohammoud Y."/>
            <person name="Nelson W.C."/>
            <person name="Radune D."/>
            <person name="Romero C.M."/>
            <person name="Sarria S."/>
            <person name="Selengut J."/>
            <person name="Shamblin C."/>
            <person name="Sullivan S.A."/>
            <person name="White O."/>
            <person name="Yu Y."/>
            <person name="Zafar N."/>
            <person name="Zhou L."/>
            <person name="Fraser C.M."/>
        </authorList>
    </citation>
    <scope>NUCLEOTIDE SEQUENCE [LARGE SCALE GENOMIC DNA]</scope>
    <source>
        <strain>ATCC 23344</strain>
    </source>
</reference>
<evidence type="ECO:0000255" key="1">
    <source>
        <dbReference type="HAMAP-Rule" id="MF_00123"/>
    </source>
</evidence>
<feature type="chain" id="PRO_0000241996" description="Arginine--tRNA ligase">
    <location>
        <begin position="1"/>
        <end position="594"/>
    </location>
</feature>
<feature type="short sequence motif" description="'HIGH' region">
    <location>
        <begin position="139"/>
        <end position="149"/>
    </location>
</feature>
<name>SYR_BURMA</name>
<organism>
    <name type="scientific">Burkholderia mallei (strain ATCC 23344)</name>
    <dbReference type="NCBI Taxonomy" id="243160"/>
    <lineage>
        <taxon>Bacteria</taxon>
        <taxon>Pseudomonadati</taxon>
        <taxon>Pseudomonadota</taxon>
        <taxon>Betaproteobacteria</taxon>
        <taxon>Burkholderiales</taxon>
        <taxon>Burkholderiaceae</taxon>
        <taxon>Burkholderia</taxon>
        <taxon>pseudomallei group</taxon>
    </lineage>
</organism>
<comment type="catalytic activity">
    <reaction evidence="1">
        <text>tRNA(Arg) + L-arginine + ATP = L-arginyl-tRNA(Arg) + AMP + diphosphate</text>
        <dbReference type="Rhea" id="RHEA:20301"/>
        <dbReference type="Rhea" id="RHEA-COMP:9658"/>
        <dbReference type="Rhea" id="RHEA-COMP:9673"/>
        <dbReference type="ChEBI" id="CHEBI:30616"/>
        <dbReference type="ChEBI" id="CHEBI:32682"/>
        <dbReference type="ChEBI" id="CHEBI:33019"/>
        <dbReference type="ChEBI" id="CHEBI:78442"/>
        <dbReference type="ChEBI" id="CHEBI:78513"/>
        <dbReference type="ChEBI" id="CHEBI:456215"/>
        <dbReference type="EC" id="6.1.1.19"/>
    </reaction>
</comment>
<comment type="subunit">
    <text evidence="1">Monomer.</text>
</comment>
<comment type="subcellular location">
    <subcellularLocation>
        <location evidence="1">Cytoplasm</location>
    </subcellularLocation>
</comment>
<comment type="similarity">
    <text evidence="1">Belongs to the class-I aminoacyl-tRNA synthetase family.</text>
</comment>
<gene>
    <name evidence="1" type="primary">argS</name>
    <name type="ordered locus">BMA0084</name>
</gene>